<name>MMS22_YEAST</name>
<reference key="1">
    <citation type="journal article" date="1997" name="Nature">
        <title>The nucleotide sequence of Saccharomyces cerevisiae chromosome XII.</title>
        <authorList>
            <person name="Johnston M."/>
            <person name="Hillier L.W."/>
            <person name="Riles L."/>
            <person name="Albermann K."/>
            <person name="Andre B."/>
            <person name="Ansorge W."/>
            <person name="Benes V."/>
            <person name="Brueckner M."/>
            <person name="Delius H."/>
            <person name="Dubois E."/>
            <person name="Duesterhoeft A."/>
            <person name="Entian K.-D."/>
            <person name="Floeth M."/>
            <person name="Goffeau A."/>
            <person name="Hebling U."/>
            <person name="Heumann K."/>
            <person name="Heuss-Neitzel D."/>
            <person name="Hilbert H."/>
            <person name="Hilger F."/>
            <person name="Kleine K."/>
            <person name="Koetter P."/>
            <person name="Louis E.J."/>
            <person name="Messenguy F."/>
            <person name="Mewes H.-W."/>
            <person name="Miosga T."/>
            <person name="Moestl D."/>
            <person name="Mueller-Auer S."/>
            <person name="Nentwich U."/>
            <person name="Obermaier B."/>
            <person name="Piravandi E."/>
            <person name="Pohl T.M."/>
            <person name="Portetelle D."/>
            <person name="Purnelle B."/>
            <person name="Rechmann S."/>
            <person name="Rieger M."/>
            <person name="Rinke M."/>
            <person name="Rose M."/>
            <person name="Scharfe M."/>
            <person name="Scherens B."/>
            <person name="Scholler P."/>
            <person name="Schwager C."/>
            <person name="Schwarz S."/>
            <person name="Underwood A.P."/>
            <person name="Urrestarazu L.A."/>
            <person name="Vandenbol M."/>
            <person name="Verhasselt P."/>
            <person name="Vierendeels F."/>
            <person name="Voet M."/>
            <person name="Volckaert G."/>
            <person name="Voss H."/>
            <person name="Wambutt R."/>
            <person name="Wedler E."/>
            <person name="Wedler H."/>
            <person name="Zimmermann F.K."/>
            <person name="Zollner A."/>
            <person name="Hani J."/>
            <person name="Hoheisel J.D."/>
        </authorList>
    </citation>
    <scope>NUCLEOTIDE SEQUENCE [LARGE SCALE GENOMIC DNA]</scope>
    <source>
        <strain>ATCC 204508 / S288c</strain>
    </source>
</reference>
<reference key="2">
    <citation type="journal article" date="2014" name="G3 (Bethesda)">
        <title>The reference genome sequence of Saccharomyces cerevisiae: Then and now.</title>
        <authorList>
            <person name="Engel S.R."/>
            <person name="Dietrich F.S."/>
            <person name="Fisk D.G."/>
            <person name="Binkley G."/>
            <person name="Balakrishnan R."/>
            <person name="Costanzo M.C."/>
            <person name="Dwight S.S."/>
            <person name="Hitz B.C."/>
            <person name="Karra K."/>
            <person name="Nash R.S."/>
            <person name="Weng S."/>
            <person name="Wong E.D."/>
            <person name="Lloyd P."/>
            <person name="Skrzypek M.S."/>
            <person name="Miyasato S.R."/>
            <person name="Simison M."/>
            <person name="Cherry J.M."/>
        </authorList>
    </citation>
    <scope>GENOME REANNOTATION</scope>
    <source>
        <strain>ATCC 204508 / S288c</strain>
    </source>
</reference>
<reference key="3">
    <citation type="journal article" date="2002" name="Proc. Natl. Acad. Sci. U.S.A.">
        <title>A genome-wide screen for methyl methanesulfonate-sensitive mutants reveals genes required for S phase progression in the presence of DNA damage.</title>
        <authorList>
            <person name="Chang M."/>
            <person name="Bellaoui M."/>
            <person name="Boone C."/>
            <person name="Brown G.W."/>
        </authorList>
    </citation>
    <scope>FUNCTION</scope>
</reference>
<reference key="4">
    <citation type="journal article" date="2003" name="Genes Cells">
        <title>Budding yeast mcm10/dna43 mutant requires a novel repair pathway for viability.</title>
        <authorList>
            <person name="Araki Y."/>
            <person name="Kawasaki Y."/>
            <person name="Sasanuma H."/>
            <person name="Tye B.K."/>
            <person name="Sugino A."/>
        </authorList>
    </citation>
    <scope>FUNCTION</scope>
</reference>
<reference key="5">
    <citation type="journal article" date="2005" name="Mol. Cell. Biol.">
        <title>Disruption of mechanisms that prevent rereplication triggers a DNA damage response.</title>
        <authorList>
            <person name="Archambault V."/>
            <person name="Ikui A.E."/>
            <person name="Drapkin B.J."/>
            <person name="Cross F.R."/>
        </authorList>
    </citation>
    <scope>FUNCTION</scope>
</reference>
<reference key="6">
    <citation type="journal article" date="2005" name="Nucleic Acids Res.">
        <title>Mms22p protects Saccharomyces cerevisiae from DNA damage induced by topoisomerase II.</title>
        <authorList>
            <person name="Baldwin E.L."/>
            <person name="Berger A.C."/>
            <person name="Corbett A.H."/>
            <person name="Osheroff N."/>
        </authorList>
    </citation>
    <scope>FUNCTION</scope>
    <scope>SUBCELLULAR LOCATION</scope>
</reference>
<reference key="7">
    <citation type="journal article" date="2006" name="DNA Repair">
        <title>Esc4/Rtt107 and the control of recombination during replication.</title>
        <authorList>
            <person name="Chin J.K."/>
            <person name="Bashkirov V.I."/>
            <person name="Heyer W.-D."/>
            <person name="Romesberg F.E."/>
        </authorList>
    </citation>
    <scope>INTERACTION WITH RTT107</scope>
</reference>
<reference key="8">
    <citation type="journal article" date="2008" name="DNA Repair">
        <title>Budding yeast Mms22 and Mms1 regulate homologous recombination induced by replisome blockage.</title>
        <authorList>
            <person name="Duro E."/>
            <person name="Vaisica J.A."/>
            <person name="Brown G.W."/>
            <person name="Rouse J."/>
        </authorList>
    </citation>
    <scope>FUNCTION</scope>
</reference>
<reference key="9">
    <citation type="journal article" date="2008" name="EMBO Rep.">
        <title>Rtt101 and Mms1 in budding yeast form a CUL4(DDB1)-like ubiquitin ligase that promotes replication through damaged DNA.</title>
        <authorList>
            <person name="Zaidi I.W."/>
            <person name="Rabut G."/>
            <person name="Poveda A."/>
            <person name="Scheel H."/>
            <person name="Malmstrom J."/>
            <person name="Ulrich H."/>
            <person name="Hofmann K."/>
            <person name="Pasero P."/>
            <person name="Peter M."/>
            <person name="Luke B."/>
        </authorList>
    </citation>
    <scope>FUNCTION</scope>
    <scope>INTERACTION WITH MMS1</scope>
    <scope>IDENTIFICATION IN A COMPLEX WITH RTT101</scope>
</reference>
<reference key="10">
    <citation type="journal article" date="2010" name="J. Biol. Chem.">
        <title>Cul8/Rtt101 forms a variety of protein complexes that regulate DNA damage response and transcriptional silencing.</title>
        <authorList>
            <person name="Mimura S."/>
            <person name="Yamaguchi T."/>
            <person name="Ishii S."/>
            <person name="Noro E."/>
            <person name="Katsura T."/>
            <person name="Obuse C."/>
            <person name="Kamura T."/>
        </authorList>
    </citation>
    <scope>INTERACTION WITH MMS1; RTT107 AND CTF4</scope>
</reference>
<reference key="11">
    <citation type="journal article" date="2011" name="Mol. Biol. Cell">
        <title>Mms1 and Mms22 stabilize the replisome during replication stress.</title>
        <authorList>
            <person name="Vaisica J.A."/>
            <person name="Baryshnikova A."/>
            <person name="Costanzo M."/>
            <person name="Boone C."/>
            <person name="Brown G.W."/>
        </authorList>
    </citation>
    <scope>FUNCTION</scope>
</reference>
<reference key="12">
    <citation type="journal article" date="2013" name="Cell">
        <title>A Cul4 E3 ubiquitin ligase regulates histone hand-off during nucleosome assembly.</title>
        <authorList>
            <person name="Han J."/>
            <person name="Zhang H."/>
            <person name="Zhang H."/>
            <person name="Wang Z."/>
            <person name="Zhou H."/>
            <person name="Zhang Z."/>
        </authorList>
    </citation>
    <scope>FUNCTION IN UBIQUITINATION OF H3</scope>
</reference>
<sequence length="1454" mass="167683">MDVDEPNPIVISDSEATDEEISIIYEPEFNENYLWAEENVQEASRSQKIVTERLSLDSTAGESCTPSVVTDTQVTTGLRWSLRKRKAIQKMPYSLERIKHRQLLEGYDISSFDSISNQLTLPKNASTVIHSNDILLTKRTGKPLDEQKDVTIDSIKPENSSVQSQRYDSDEEIPKKRHRTFKDLDQDIVFQSGDSTEDEQDLASTNLQNTQNDEVIFRGRVLNVRTGYRGVLPRVAWEKSLQKQQSSKVTKRKTQLLNHKGVAKRKMNRSAHIEDEEQNLLNDLIAPDDELDIEENAPPDIYLGNLPEDREANEKELKELQEYYESKYSEDAQSAGTSGFNLNEEYRNEPVYELEYDGPGSCISHVSYKDQPIIYLNSRHSDSGFSEQYNISAEDNQSVISLDAAEEHNDGIIDKMLVKPKRIKATNDANFLNTKSKRVRRYKYKYRNSCLAPSTKAIKVGKRSAHKSHLAANNPVSFVSKKNHVIDDYFFEELESQSLEQDDSSSLKPQKKRRKKKAPIYSSFSADLESRRKPVFNTVVEVPTNRYAFTKPNVRNRDSINHDMEFEEEDSNQELGPIMVVLDSILLKKPFEPPNFFKIQLSDKSFLLSKLNPADIATSLQKIFRVIIDKGITDTELVHFNESLIAFLVHLDMPELFDLIGEFHREFRSKVNSLRKKAKPIHFFQIAACQLMFLEISRYNKISAAAKFDMDVKLLDHIVSFFKLLSVCYDSVMKNPMQYLYTSYYILSAVVDVIHKKEALWDLFQKHPFSPHISLLLVNIFPTKVCRWQVLRLDSEFQPLSSAFRFINYCIETCNWNVTNSLILSLDRIFKRRRFSDFEEESDLSQNNKIIYPPTNQLTSRLMFNRYLHLLTLCELSSSDTQRVIPMGDISMNDSLSVLKNRLNLLIVLATRFDLNLEKRFQELTRPLYSKEYLNLHTQNTVRTITTLIMQASLSFLEISRIKNHPFSGKFIASLFDKLVLQQPSISGVTENFLKEFTNLVSKMKRKSVSMLKFLYPSLVAMSQENIFESSFFLLLQVYLKSLDVLGPTWVQNYLFQFIKSKAQENERWIECYCQIGKFLVDSGIFTWWTFFTYNGLDAALHFQLAFHSLIIDFCDTDSFELLKKPLYSIASDLLLISKDDAFYHFLSNLLKRAHIIVADLKPVSDENELLRLAYIFSKALKKNAYQDLLAVFLSLAKKHYDEGDISRNFLAKYLEFLNKNCLTELRNNQLFISLRRELGISSDEDEKCAFWDSFNEAGDILSKAAFVETGIVQACCTGNEIDGYLDNLSTLFTSTMLESPFAFFSDLVIAHIFENRPFFDVNIKNFLLSHFIDLFNKVLKMKFEQVSPDEFAELCKVYRALCIECATDDTFNSNSDLIAAKDAFLVSVLRIADGFWEHDKLLQLRMLDSNMNIPNQIPHTTLQSSLSAIVIKIIESNIGKIEASEPFKTFKNT</sequence>
<accession>Q06164</accession>
<accession>D6VYW3</accession>
<gene>
    <name type="primary">MMS22</name>
    <name type="synonym">SLM2</name>
    <name type="ordered locus">YLR320W</name>
</gene>
<proteinExistence type="evidence at protein level"/>
<feature type="chain" id="PRO_0000257821" description="E3 ubiquitin-protein ligase substrate receptor MMS22">
    <location>
        <begin position="1"/>
        <end position="1454"/>
    </location>
</feature>
<feature type="region of interest" description="Disordered" evidence="1">
    <location>
        <begin position="159"/>
        <end position="178"/>
    </location>
</feature>
<feature type="region of interest" description="Required for interaction with MMS1">
    <location>
        <begin position="1201"/>
        <end position="1454"/>
    </location>
</feature>
<feature type="strand" evidence="13">
    <location>
        <begin position="23"/>
        <end position="25"/>
    </location>
</feature>
<feature type="helix" evidence="13">
    <location>
        <begin position="33"/>
        <end position="35"/>
    </location>
</feature>
<protein>
    <recommendedName>
        <fullName>E3 ubiquitin-protein ligase substrate receptor MMS22</fullName>
    </recommendedName>
    <alternativeName>
        <fullName>Methyl methanesulfonate-sensitivity protein 22</fullName>
    </alternativeName>
    <alternativeName>
        <fullName>Synthetically lethal with MCM10 protein 2</fullName>
    </alternativeName>
</protein>
<keyword id="KW-0002">3D-structure</keyword>
<keyword id="KW-0131">Cell cycle</keyword>
<keyword id="KW-0132">Cell division</keyword>
<keyword id="KW-0227">DNA damage</keyword>
<keyword id="KW-0234">DNA repair</keyword>
<keyword id="KW-0539">Nucleus</keyword>
<keyword id="KW-1185">Reference proteome</keyword>
<dbReference type="EMBL" id="U20618">
    <property type="protein sequence ID" value="AAB64521.1"/>
    <property type="molecule type" value="Genomic_DNA"/>
</dbReference>
<dbReference type="EMBL" id="BK006945">
    <property type="protein sequence ID" value="DAA09629.1"/>
    <property type="molecule type" value="Genomic_DNA"/>
</dbReference>
<dbReference type="PIR" id="S53398">
    <property type="entry name" value="S53398"/>
</dbReference>
<dbReference type="RefSeq" id="NP_013424.1">
    <property type="nucleotide sequence ID" value="NM_001182209.1"/>
</dbReference>
<dbReference type="PDB" id="6J0X">
    <property type="method" value="X-ray"/>
    <property type="resolution" value="2.31 A"/>
    <property type="chains" value="E/F/G/H=22-37"/>
</dbReference>
<dbReference type="PDBsum" id="6J0X"/>
<dbReference type="SMR" id="Q06164"/>
<dbReference type="BioGRID" id="31584">
    <property type="interactions" value="1082"/>
</dbReference>
<dbReference type="ComplexPortal" id="CPX-1157">
    <property type="entry name" value="CUL8-MMS1-MMS22-ESC4 E3 ubiquitin ligase complex"/>
</dbReference>
<dbReference type="ComplexPortal" id="CPX-1165">
    <property type="entry name" value="CUL8-MMS1-MMS22-CTF4 E3 ubiquitin ligase complex"/>
</dbReference>
<dbReference type="DIP" id="DIP-6567N"/>
<dbReference type="FunCoup" id="Q06164">
    <property type="interactions" value="615"/>
</dbReference>
<dbReference type="IntAct" id="Q06164">
    <property type="interactions" value="15"/>
</dbReference>
<dbReference type="MINT" id="Q06164"/>
<dbReference type="STRING" id="4932.YLR320W"/>
<dbReference type="iPTMnet" id="Q06164"/>
<dbReference type="PaxDb" id="4932-YLR320W"/>
<dbReference type="PeptideAtlas" id="Q06164"/>
<dbReference type="EnsemblFungi" id="YLR320W_mRNA">
    <property type="protein sequence ID" value="YLR320W"/>
    <property type="gene ID" value="YLR320W"/>
</dbReference>
<dbReference type="GeneID" id="851030"/>
<dbReference type="KEGG" id="sce:YLR320W"/>
<dbReference type="AGR" id="SGD:S000004312"/>
<dbReference type="SGD" id="S000004312">
    <property type="gene designation" value="MMS22"/>
</dbReference>
<dbReference type="VEuPathDB" id="FungiDB:YLR320W"/>
<dbReference type="eggNOG" id="ENOG502R0S3">
    <property type="taxonomic scope" value="Eukaryota"/>
</dbReference>
<dbReference type="HOGENOM" id="CLU_251473_0_0_1"/>
<dbReference type="InParanoid" id="Q06164"/>
<dbReference type="OMA" id="IHFYQIA"/>
<dbReference type="OrthoDB" id="4068315at2759"/>
<dbReference type="BioCyc" id="YEAST:G3O-32404-MONOMER"/>
<dbReference type="BioGRID-ORCS" id="851030">
    <property type="hits" value="1 hit in 10 CRISPR screens"/>
</dbReference>
<dbReference type="PRO" id="PR:Q06164"/>
<dbReference type="Proteomes" id="UP000002311">
    <property type="component" value="Chromosome XII"/>
</dbReference>
<dbReference type="RNAct" id="Q06164">
    <property type="molecule type" value="protein"/>
</dbReference>
<dbReference type="GO" id="GO:0035361">
    <property type="term" value="C:Cul8-RING ubiquitin ligase complex"/>
    <property type="evidence" value="ECO:0000314"/>
    <property type="project" value="SGD"/>
</dbReference>
<dbReference type="GO" id="GO:0005634">
    <property type="term" value="C:nucleus"/>
    <property type="evidence" value="ECO:0000314"/>
    <property type="project" value="SGD"/>
</dbReference>
<dbReference type="GO" id="GO:0051301">
    <property type="term" value="P:cell division"/>
    <property type="evidence" value="ECO:0007669"/>
    <property type="project" value="UniProtKB-KW"/>
</dbReference>
<dbReference type="GO" id="GO:0006974">
    <property type="term" value="P:DNA damage response"/>
    <property type="evidence" value="ECO:0000315"/>
    <property type="project" value="SGD"/>
</dbReference>
<dbReference type="GO" id="GO:0006302">
    <property type="term" value="P:double-strand break repair"/>
    <property type="evidence" value="ECO:0000315"/>
    <property type="project" value="SGD"/>
</dbReference>
<dbReference type="GO" id="GO:0000724">
    <property type="term" value="P:double-strand break repair via homologous recombination"/>
    <property type="evidence" value="ECO:0000318"/>
    <property type="project" value="GO_Central"/>
</dbReference>
<dbReference type="GO" id="GO:0045144">
    <property type="term" value="P:meiotic sister chromatid segregation"/>
    <property type="evidence" value="ECO:0000315"/>
    <property type="project" value="SGD"/>
</dbReference>
<dbReference type="GO" id="GO:0006334">
    <property type="term" value="P:nucleosome assembly"/>
    <property type="evidence" value="ECO:0000303"/>
    <property type="project" value="ComplexPortal"/>
</dbReference>
<dbReference type="GO" id="GO:0000725">
    <property type="term" value="P:recombinational repair"/>
    <property type="evidence" value="ECO:0000315"/>
    <property type="project" value="SGD"/>
</dbReference>
<dbReference type="GO" id="GO:0031297">
    <property type="term" value="P:replication fork processing"/>
    <property type="evidence" value="ECO:0000315"/>
    <property type="project" value="SGD"/>
</dbReference>
<dbReference type="InterPro" id="IPR019021">
    <property type="entry name" value="Mms22"/>
</dbReference>
<dbReference type="InterPro" id="IPR013220">
    <property type="entry name" value="Mms22_budding_yeast"/>
</dbReference>
<dbReference type="PANTHER" id="PTHR28122">
    <property type="entry name" value="E3 UBIQUITIN-PROTEIN LIGASE SUBSTRATE RECEPTOR MMS22"/>
    <property type="match status" value="1"/>
</dbReference>
<dbReference type="PANTHER" id="PTHR28122:SF1">
    <property type="entry name" value="E3 UBIQUITIN-PROTEIN LIGASE SUBSTRATE RECEPTOR MMS22"/>
    <property type="match status" value="1"/>
</dbReference>
<dbReference type="Pfam" id="PF09462">
    <property type="entry name" value="Mus7"/>
    <property type="match status" value="1"/>
</dbReference>
<dbReference type="PIRSF" id="PIRSF007808">
    <property type="entry name" value="MMS22"/>
    <property type="match status" value="1"/>
</dbReference>
<organism>
    <name type="scientific">Saccharomyces cerevisiae (strain ATCC 204508 / S288c)</name>
    <name type="common">Baker's yeast</name>
    <dbReference type="NCBI Taxonomy" id="559292"/>
    <lineage>
        <taxon>Eukaryota</taxon>
        <taxon>Fungi</taxon>
        <taxon>Dikarya</taxon>
        <taxon>Ascomycota</taxon>
        <taxon>Saccharomycotina</taxon>
        <taxon>Saccharomycetes</taxon>
        <taxon>Saccharomycetales</taxon>
        <taxon>Saccharomycetaceae</taxon>
        <taxon>Saccharomyces</taxon>
    </lineage>
</organism>
<comment type="function">
    <text evidence="2 3 4 5 7 8 10 11">Substrate targeting component of a cullin-RING-based E3 ubiquitin-protein ligase complex RTT101(MMS1-MMS22). RTT101(MMS1-MMS22) promotes fork progression through damaged DNA or natural pause sites by stabilizing replication proteins like the replication fork-pausing complex (FPC) and leading-strand polymerase at stalled replication forks. RTT101(MMS1-MMS22) ubiquitinates the acetylated histones H3K56ac-H4 at lysine residues H3K121, H3K122 and H3K125. Ubiquitination is required for efficient histone deposition during replication-coupled nucleosome assembly, probably by facilitating the transfer of H3-H4 from ASF1 to other chaperones involved in histone deposition.</text>
</comment>
<comment type="subunit">
    <text evidence="6 8 9">Component of a cullin-RING ligase (CRL) composed of 4 subunits: the RING protein HRT1, the cullin RTT101, a linker protein MMS1, and the substrate receptor MMS22. This complex further interacts with RTT107 and CTF4 to form RTT101-MMS1-MMS22-RTT107 and RTT101-MMS1-MMS22-CTF4 complexes respectively. Interacts (via C-ter) with MMS1 (via N-ter). Interacts with RTT107.</text>
</comment>
<comment type="interaction">
    <interactant intactId="EBI-31156">
        <id>Q06164</id>
    </interactant>
    <interactant intactId="EBI-5209">
        <id>Q01454</id>
        <label>CTF4</label>
    </interactant>
    <organismsDiffer>false</organismsDiffer>
    <experiments>4</experiments>
</comment>
<comment type="interaction">
    <interactant intactId="EBI-31156">
        <id>Q06164</id>
    </interactant>
    <interactant intactId="EBI-38894">
        <id>Q06211</id>
        <label>MMS1</label>
    </interactant>
    <organismsDiffer>false</organismsDiffer>
    <experiments>9</experiments>
</comment>
<comment type="interaction">
    <interactant intactId="EBI-31156">
        <id>Q06164</id>
    </interactant>
    <interactant intactId="EBI-25861">
        <id>P47050</id>
        <label>RTT101</label>
    </interactant>
    <organismsDiffer>false</organismsDiffer>
    <experiments>11</experiments>
</comment>
<comment type="interaction">
    <interactant intactId="EBI-31156">
        <id>Q06164</id>
    </interactant>
    <interactant intactId="EBI-24788">
        <id>P38850</id>
        <label>RTT107</label>
    </interactant>
    <organismsDiffer>false</organismsDiffer>
    <experiments>9</experiments>
</comment>
<comment type="subcellular location">
    <subcellularLocation>
        <location evidence="4">Nucleus</location>
    </subcellularLocation>
    <text>Nuclear punctate foci structures.</text>
</comment>
<comment type="similarity">
    <text evidence="12">Belongs to the MMS22 family.</text>
</comment>
<evidence type="ECO:0000256" key="1">
    <source>
        <dbReference type="SAM" id="MobiDB-lite"/>
    </source>
</evidence>
<evidence type="ECO:0000269" key="2">
    <source>
    </source>
</evidence>
<evidence type="ECO:0000269" key="3">
    <source>
    </source>
</evidence>
<evidence type="ECO:0000269" key="4">
    <source>
    </source>
</evidence>
<evidence type="ECO:0000269" key="5">
    <source>
    </source>
</evidence>
<evidence type="ECO:0000269" key="6">
    <source>
    </source>
</evidence>
<evidence type="ECO:0000269" key="7">
    <source>
    </source>
</evidence>
<evidence type="ECO:0000269" key="8">
    <source>
    </source>
</evidence>
<evidence type="ECO:0000269" key="9">
    <source>
    </source>
</evidence>
<evidence type="ECO:0000269" key="10">
    <source>
    </source>
</evidence>
<evidence type="ECO:0000269" key="11">
    <source>
    </source>
</evidence>
<evidence type="ECO:0000305" key="12"/>
<evidence type="ECO:0007829" key="13">
    <source>
        <dbReference type="PDB" id="6J0X"/>
    </source>
</evidence>